<evidence type="ECO:0000255" key="1">
    <source>
        <dbReference type="HAMAP-Rule" id="MF_00104"/>
    </source>
</evidence>
<comment type="function">
    <text evidence="1">Digests double-stranded RNA. Involved in the processing of primary rRNA transcript to yield the immediate precursors to the large and small rRNAs (23S and 16S). Processes some mRNAs, and tRNAs when they are encoded in the rRNA operon. Processes pre-crRNA and tracrRNA of type II CRISPR loci if present in the organism.</text>
</comment>
<comment type="catalytic activity">
    <reaction evidence="1">
        <text>Endonucleolytic cleavage to 5'-phosphomonoester.</text>
        <dbReference type="EC" id="3.1.26.3"/>
    </reaction>
</comment>
<comment type="cofactor">
    <cofactor evidence="1">
        <name>Mg(2+)</name>
        <dbReference type="ChEBI" id="CHEBI:18420"/>
    </cofactor>
</comment>
<comment type="subunit">
    <text evidence="1">Homodimer.</text>
</comment>
<comment type="subcellular location">
    <subcellularLocation>
        <location evidence="1">Cytoplasm</location>
    </subcellularLocation>
</comment>
<comment type="similarity">
    <text evidence="1">Belongs to the ribonuclease III family.</text>
</comment>
<organism>
    <name type="scientific">Pseudomonas putida (strain W619)</name>
    <dbReference type="NCBI Taxonomy" id="390235"/>
    <lineage>
        <taxon>Bacteria</taxon>
        <taxon>Pseudomonadati</taxon>
        <taxon>Pseudomonadota</taxon>
        <taxon>Gammaproteobacteria</taxon>
        <taxon>Pseudomonadales</taxon>
        <taxon>Pseudomonadaceae</taxon>
        <taxon>Pseudomonas</taxon>
    </lineage>
</organism>
<gene>
    <name evidence="1" type="primary">rnc</name>
    <name type="ordered locus">PputW619_1073</name>
</gene>
<feature type="chain" id="PRO_1000094125" description="Ribonuclease 3">
    <location>
        <begin position="1"/>
        <end position="229"/>
    </location>
</feature>
<feature type="domain" description="RNase III" evidence="1">
    <location>
        <begin position="5"/>
        <end position="127"/>
    </location>
</feature>
<feature type="domain" description="DRBM" evidence="1">
    <location>
        <begin position="154"/>
        <end position="224"/>
    </location>
</feature>
<feature type="active site" evidence="1">
    <location>
        <position position="44"/>
    </location>
</feature>
<feature type="active site" evidence="1">
    <location>
        <position position="116"/>
    </location>
</feature>
<feature type="binding site" evidence="1">
    <location>
        <position position="40"/>
    </location>
    <ligand>
        <name>Mg(2+)</name>
        <dbReference type="ChEBI" id="CHEBI:18420"/>
    </ligand>
</feature>
<feature type="binding site" evidence="1">
    <location>
        <position position="113"/>
    </location>
    <ligand>
        <name>Mg(2+)</name>
        <dbReference type="ChEBI" id="CHEBI:18420"/>
    </ligand>
</feature>
<feature type="binding site" evidence="1">
    <location>
        <position position="116"/>
    </location>
    <ligand>
        <name>Mg(2+)</name>
        <dbReference type="ChEBI" id="CHEBI:18420"/>
    </ligand>
</feature>
<protein>
    <recommendedName>
        <fullName evidence="1">Ribonuclease 3</fullName>
        <ecNumber evidence="1">3.1.26.3</ecNumber>
    </recommendedName>
    <alternativeName>
        <fullName evidence="1">Ribonuclease III</fullName>
        <shortName evidence="1">RNase III</shortName>
    </alternativeName>
</protein>
<dbReference type="EC" id="3.1.26.3" evidence="1"/>
<dbReference type="EMBL" id="CP000949">
    <property type="protein sequence ID" value="ACA71578.1"/>
    <property type="molecule type" value="Genomic_DNA"/>
</dbReference>
<dbReference type="SMR" id="B1J4E0"/>
<dbReference type="STRING" id="390235.PputW619_1073"/>
<dbReference type="KEGG" id="ppw:PputW619_1073"/>
<dbReference type="eggNOG" id="COG0571">
    <property type="taxonomic scope" value="Bacteria"/>
</dbReference>
<dbReference type="HOGENOM" id="CLU_000907_1_1_6"/>
<dbReference type="OrthoDB" id="9805026at2"/>
<dbReference type="GO" id="GO:0005737">
    <property type="term" value="C:cytoplasm"/>
    <property type="evidence" value="ECO:0007669"/>
    <property type="project" value="UniProtKB-SubCell"/>
</dbReference>
<dbReference type="GO" id="GO:0003725">
    <property type="term" value="F:double-stranded RNA binding"/>
    <property type="evidence" value="ECO:0007669"/>
    <property type="project" value="TreeGrafter"/>
</dbReference>
<dbReference type="GO" id="GO:0046872">
    <property type="term" value="F:metal ion binding"/>
    <property type="evidence" value="ECO:0007669"/>
    <property type="project" value="UniProtKB-KW"/>
</dbReference>
<dbReference type="GO" id="GO:0004525">
    <property type="term" value="F:ribonuclease III activity"/>
    <property type="evidence" value="ECO:0007669"/>
    <property type="project" value="UniProtKB-UniRule"/>
</dbReference>
<dbReference type="GO" id="GO:0019843">
    <property type="term" value="F:rRNA binding"/>
    <property type="evidence" value="ECO:0007669"/>
    <property type="project" value="UniProtKB-KW"/>
</dbReference>
<dbReference type="GO" id="GO:0006397">
    <property type="term" value="P:mRNA processing"/>
    <property type="evidence" value="ECO:0007669"/>
    <property type="project" value="UniProtKB-UniRule"/>
</dbReference>
<dbReference type="GO" id="GO:0010468">
    <property type="term" value="P:regulation of gene expression"/>
    <property type="evidence" value="ECO:0007669"/>
    <property type="project" value="TreeGrafter"/>
</dbReference>
<dbReference type="GO" id="GO:0006364">
    <property type="term" value="P:rRNA processing"/>
    <property type="evidence" value="ECO:0007669"/>
    <property type="project" value="UniProtKB-UniRule"/>
</dbReference>
<dbReference type="GO" id="GO:0008033">
    <property type="term" value="P:tRNA processing"/>
    <property type="evidence" value="ECO:0007669"/>
    <property type="project" value="UniProtKB-KW"/>
</dbReference>
<dbReference type="CDD" id="cd10845">
    <property type="entry name" value="DSRM_RNAse_III_family"/>
    <property type="match status" value="1"/>
</dbReference>
<dbReference type="CDD" id="cd00593">
    <property type="entry name" value="RIBOc"/>
    <property type="match status" value="1"/>
</dbReference>
<dbReference type="FunFam" id="1.10.1520.10:FF:000001">
    <property type="entry name" value="Ribonuclease 3"/>
    <property type="match status" value="1"/>
</dbReference>
<dbReference type="Gene3D" id="3.30.160.20">
    <property type="match status" value="1"/>
</dbReference>
<dbReference type="Gene3D" id="1.10.1520.10">
    <property type="entry name" value="Ribonuclease III domain"/>
    <property type="match status" value="1"/>
</dbReference>
<dbReference type="HAMAP" id="MF_00104">
    <property type="entry name" value="RNase_III"/>
    <property type="match status" value="1"/>
</dbReference>
<dbReference type="InterPro" id="IPR014720">
    <property type="entry name" value="dsRBD_dom"/>
</dbReference>
<dbReference type="InterPro" id="IPR011907">
    <property type="entry name" value="RNase_III"/>
</dbReference>
<dbReference type="InterPro" id="IPR000999">
    <property type="entry name" value="RNase_III_dom"/>
</dbReference>
<dbReference type="InterPro" id="IPR036389">
    <property type="entry name" value="RNase_III_sf"/>
</dbReference>
<dbReference type="NCBIfam" id="TIGR02191">
    <property type="entry name" value="RNaseIII"/>
    <property type="match status" value="1"/>
</dbReference>
<dbReference type="PANTHER" id="PTHR11207:SF0">
    <property type="entry name" value="RIBONUCLEASE 3"/>
    <property type="match status" value="1"/>
</dbReference>
<dbReference type="PANTHER" id="PTHR11207">
    <property type="entry name" value="RIBONUCLEASE III"/>
    <property type="match status" value="1"/>
</dbReference>
<dbReference type="Pfam" id="PF00035">
    <property type="entry name" value="dsrm"/>
    <property type="match status" value="1"/>
</dbReference>
<dbReference type="Pfam" id="PF14622">
    <property type="entry name" value="Ribonucleas_3_3"/>
    <property type="match status" value="1"/>
</dbReference>
<dbReference type="SMART" id="SM00358">
    <property type="entry name" value="DSRM"/>
    <property type="match status" value="1"/>
</dbReference>
<dbReference type="SMART" id="SM00535">
    <property type="entry name" value="RIBOc"/>
    <property type="match status" value="1"/>
</dbReference>
<dbReference type="SUPFAM" id="SSF54768">
    <property type="entry name" value="dsRNA-binding domain-like"/>
    <property type="match status" value="1"/>
</dbReference>
<dbReference type="SUPFAM" id="SSF69065">
    <property type="entry name" value="RNase III domain-like"/>
    <property type="match status" value="1"/>
</dbReference>
<dbReference type="PROSITE" id="PS50137">
    <property type="entry name" value="DS_RBD"/>
    <property type="match status" value="1"/>
</dbReference>
<dbReference type="PROSITE" id="PS00517">
    <property type="entry name" value="RNASE_3_1"/>
    <property type="match status" value="1"/>
</dbReference>
<dbReference type="PROSITE" id="PS50142">
    <property type="entry name" value="RNASE_3_2"/>
    <property type="match status" value="1"/>
</dbReference>
<keyword id="KW-0963">Cytoplasm</keyword>
<keyword id="KW-0255">Endonuclease</keyword>
<keyword id="KW-0378">Hydrolase</keyword>
<keyword id="KW-0460">Magnesium</keyword>
<keyword id="KW-0479">Metal-binding</keyword>
<keyword id="KW-0507">mRNA processing</keyword>
<keyword id="KW-0540">Nuclease</keyword>
<keyword id="KW-0694">RNA-binding</keyword>
<keyword id="KW-0698">rRNA processing</keyword>
<keyword id="KW-0699">rRNA-binding</keyword>
<keyword id="KW-0819">tRNA processing</keyword>
<accession>B1J4E0</accession>
<proteinExistence type="inferred from homology"/>
<sequence>MSASLARLERKLGYTFKDQDQMVLALTHRSYAGRNNERLEFLGDAILNFVAGEALFERFPQAREGQLSRLRARLVKGETLARLARGFDLGEYLRLGSGELKSGGFRRESILADALEALIGAIYLDADMQTARERVLAWLTDEFESLTLVDTNKDPKTRLQEFLQSRSCELPRYEVVDIQGEPHCRTFFVECEVVLLNNKSRGQGVSRRIAEQVAAAAALIALGVENGND</sequence>
<reference key="1">
    <citation type="submission" date="2008-02" db="EMBL/GenBank/DDBJ databases">
        <title>Complete sequence of Pseudomonas putida W619.</title>
        <authorList>
            <person name="Copeland A."/>
            <person name="Lucas S."/>
            <person name="Lapidus A."/>
            <person name="Barry K."/>
            <person name="Detter J.C."/>
            <person name="Glavina del Rio T."/>
            <person name="Dalin E."/>
            <person name="Tice H."/>
            <person name="Pitluck S."/>
            <person name="Chain P."/>
            <person name="Malfatti S."/>
            <person name="Shin M."/>
            <person name="Vergez L."/>
            <person name="Schmutz J."/>
            <person name="Larimer F."/>
            <person name="Land M."/>
            <person name="Hauser L."/>
            <person name="Kyrpides N."/>
            <person name="Kim E."/>
            <person name="Taghavi S."/>
            <person name="Vangronsveld D."/>
            <person name="van der Lelie D."/>
            <person name="Richardson P."/>
        </authorList>
    </citation>
    <scope>NUCLEOTIDE SEQUENCE [LARGE SCALE GENOMIC DNA]</scope>
    <source>
        <strain>W619</strain>
    </source>
</reference>
<name>RNC_PSEPW</name>